<organism>
    <name type="scientific">Bradyrhizobium diazoefficiens (strain JCM 10833 / BCRC 13528 / IAM 13628 / NBRC 14792 / USDA 110)</name>
    <dbReference type="NCBI Taxonomy" id="224911"/>
    <lineage>
        <taxon>Bacteria</taxon>
        <taxon>Pseudomonadati</taxon>
        <taxon>Pseudomonadota</taxon>
        <taxon>Alphaproteobacteria</taxon>
        <taxon>Hyphomicrobiales</taxon>
        <taxon>Nitrobacteraceae</taxon>
        <taxon>Bradyrhizobium</taxon>
    </lineage>
</organism>
<gene>
    <name type="primary">acyP</name>
    <name type="ordered locus">bsl5265</name>
</gene>
<accession>Q89JL8</accession>
<protein>
    <recommendedName>
        <fullName>Acylphosphatase</fullName>
        <ecNumber>3.6.1.7</ecNumber>
    </recommendedName>
    <alternativeName>
        <fullName>Acylphosphate phosphohydrolase</fullName>
    </alternativeName>
</protein>
<comment type="catalytic activity">
    <reaction>
        <text>an acyl phosphate + H2O = a carboxylate + phosphate + H(+)</text>
        <dbReference type="Rhea" id="RHEA:14965"/>
        <dbReference type="ChEBI" id="CHEBI:15377"/>
        <dbReference type="ChEBI" id="CHEBI:15378"/>
        <dbReference type="ChEBI" id="CHEBI:29067"/>
        <dbReference type="ChEBI" id="CHEBI:43474"/>
        <dbReference type="ChEBI" id="CHEBI:59918"/>
        <dbReference type="EC" id="3.6.1.7"/>
    </reaction>
</comment>
<comment type="similarity">
    <text evidence="2">Belongs to the acylphosphatase family.</text>
</comment>
<proteinExistence type="inferred from homology"/>
<dbReference type="EC" id="3.6.1.7"/>
<dbReference type="EMBL" id="BA000040">
    <property type="protein sequence ID" value="BAC50530.1"/>
    <property type="molecule type" value="Genomic_DNA"/>
</dbReference>
<dbReference type="RefSeq" id="NP_771905.1">
    <property type="nucleotide sequence ID" value="NC_004463.1"/>
</dbReference>
<dbReference type="RefSeq" id="WP_011088021.1">
    <property type="nucleotide sequence ID" value="NC_004463.1"/>
</dbReference>
<dbReference type="SMR" id="Q89JL8"/>
<dbReference type="FunCoup" id="Q89JL8">
    <property type="interactions" value="415"/>
</dbReference>
<dbReference type="STRING" id="224911.AAV28_23705"/>
<dbReference type="EnsemblBacteria" id="BAC50530">
    <property type="protein sequence ID" value="BAC50530"/>
    <property type="gene ID" value="BAC50530"/>
</dbReference>
<dbReference type="GeneID" id="46492259"/>
<dbReference type="KEGG" id="bja:bsl5265"/>
<dbReference type="PATRIC" id="fig|224911.44.peg.5154"/>
<dbReference type="eggNOG" id="COG1254">
    <property type="taxonomic scope" value="Bacteria"/>
</dbReference>
<dbReference type="HOGENOM" id="CLU_141932_3_2_5"/>
<dbReference type="InParanoid" id="Q89JL8"/>
<dbReference type="OrthoDB" id="5295388at2"/>
<dbReference type="PhylomeDB" id="Q89JL8"/>
<dbReference type="Proteomes" id="UP000002526">
    <property type="component" value="Chromosome"/>
</dbReference>
<dbReference type="GO" id="GO:0003998">
    <property type="term" value="F:acylphosphatase activity"/>
    <property type="evidence" value="ECO:0007669"/>
    <property type="project" value="UniProtKB-EC"/>
</dbReference>
<dbReference type="Gene3D" id="3.30.70.100">
    <property type="match status" value="1"/>
</dbReference>
<dbReference type="InterPro" id="IPR020456">
    <property type="entry name" value="Acylphosphatase"/>
</dbReference>
<dbReference type="InterPro" id="IPR001792">
    <property type="entry name" value="Acylphosphatase-like_dom"/>
</dbReference>
<dbReference type="InterPro" id="IPR036046">
    <property type="entry name" value="Acylphosphatase-like_dom_sf"/>
</dbReference>
<dbReference type="InterPro" id="IPR017968">
    <property type="entry name" value="Acylphosphatase_CS"/>
</dbReference>
<dbReference type="NCBIfam" id="NF010996">
    <property type="entry name" value="PRK14421.1"/>
    <property type="match status" value="1"/>
</dbReference>
<dbReference type="PANTHER" id="PTHR47268">
    <property type="entry name" value="ACYLPHOSPHATASE"/>
    <property type="match status" value="1"/>
</dbReference>
<dbReference type="PANTHER" id="PTHR47268:SF4">
    <property type="entry name" value="ACYLPHOSPHATASE"/>
    <property type="match status" value="1"/>
</dbReference>
<dbReference type="Pfam" id="PF00708">
    <property type="entry name" value="Acylphosphatase"/>
    <property type="match status" value="1"/>
</dbReference>
<dbReference type="SUPFAM" id="SSF54975">
    <property type="entry name" value="Acylphosphatase/BLUF domain-like"/>
    <property type="match status" value="1"/>
</dbReference>
<dbReference type="PROSITE" id="PS00151">
    <property type="entry name" value="ACYLPHOSPHATASE_2"/>
    <property type="match status" value="1"/>
</dbReference>
<dbReference type="PROSITE" id="PS51160">
    <property type="entry name" value="ACYLPHOSPHATASE_3"/>
    <property type="match status" value="1"/>
</dbReference>
<name>ACYP_BRADU</name>
<feature type="chain" id="PRO_0000326666" description="Acylphosphatase">
    <location>
        <begin position="1"/>
        <end position="99"/>
    </location>
</feature>
<feature type="domain" description="Acylphosphatase-like" evidence="1">
    <location>
        <begin position="5"/>
        <end position="97"/>
    </location>
</feature>
<feature type="active site" evidence="1">
    <location>
        <position position="20"/>
    </location>
</feature>
<feature type="active site" evidence="1">
    <location>
        <position position="38"/>
    </location>
</feature>
<sequence>MSRAILQVMIRGRVQGVGYRAWVEYQATASGLEGWVRNRRDGSVEALFAGAPNHVADMVALCRHGPPSSRVDSVTSETAGADELNLRRAGEKFSVLPTV</sequence>
<keyword id="KW-0378">Hydrolase</keyword>
<keyword id="KW-1185">Reference proteome</keyword>
<evidence type="ECO:0000255" key="1">
    <source>
        <dbReference type="PROSITE-ProRule" id="PRU00520"/>
    </source>
</evidence>
<evidence type="ECO:0000305" key="2"/>
<reference key="1">
    <citation type="journal article" date="2002" name="DNA Res.">
        <title>Complete genomic sequence of nitrogen-fixing symbiotic bacterium Bradyrhizobium japonicum USDA110.</title>
        <authorList>
            <person name="Kaneko T."/>
            <person name="Nakamura Y."/>
            <person name="Sato S."/>
            <person name="Minamisawa K."/>
            <person name="Uchiumi T."/>
            <person name="Sasamoto S."/>
            <person name="Watanabe A."/>
            <person name="Idesawa K."/>
            <person name="Iriguchi M."/>
            <person name="Kawashima K."/>
            <person name="Kohara M."/>
            <person name="Matsumoto M."/>
            <person name="Shimpo S."/>
            <person name="Tsuruoka H."/>
            <person name="Wada T."/>
            <person name="Yamada M."/>
            <person name="Tabata S."/>
        </authorList>
    </citation>
    <scope>NUCLEOTIDE SEQUENCE [LARGE SCALE GENOMIC DNA]</scope>
    <source>
        <strain>JCM 10833 / BCRC 13528 / IAM 13628 / NBRC 14792 / USDA 110</strain>
    </source>
</reference>